<gene>
    <name type="ordered locus">MK0844</name>
</gene>
<feature type="chain" id="PRO_0000130581" description="Protein translation factor SUI1 homolog">
    <location>
        <begin position="1"/>
        <end position="106"/>
    </location>
</feature>
<organism>
    <name type="scientific">Methanopyrus kandleri (strain AV19 / DSM 6324 / JCM 9639 / NBRC 100938)</name>
    <dbReference type="NCBI Taxonomy" id="190192"/>
    <lineage>
        <taxon>Archaea</taxon>
        <taxon>Methanobacteriati</taxon>
        <taxon>Methanobacteriota</taxon>
        <taxon>Methanomada group</taxon>
        <taxon>Methanopyri</taxon>
        <taxon>Methanopyrales</taxon>
        <taxon>Methanopyraceae</taxon>
        <taxon>Methanopyrus</taxon>
    </lineage>
</organism>
<proteinExistence type="inferred from homology"/>
<comment type="similarity">
    <text evidence="1">Belongs to the SUI1 family.</text>
</comment>
<reference key="1">
    <citation type="journal article" date="2002" name="Proc. Natl. Acad. Sci. U.S.A.">
        <title>The complete genome of hyperthermophile Methanopyrus kandleri AV19 and monophyly of archaeal methanogens.</title>
        <authorList>
            <person name="Slesarev A.I."/>
            <person name="Mezhevaya K.V."/>
            <person name="Makarova K.S."/>
            <person name="Polushin N.N."/>
            <person name="Shcherbinina O.V."/>
            <person name="Shakhova V.V."/>
            <person name="Belova G.I."/>
            <person name="Aravind L."/>
            <person name="Natale D.A."/>
            <person name="Rogozin I.B."/>
            <person name="Tatusov R.L."/>
            <person name="Wolf Y.I."/>
            <person name="Stetter K.O."/>
            <person name="Malykh A.G."/>
            <person name="Koonin E.V."/>
            <person name="Kozyavkin S.A."/>
        </authorList>
    </citation>
    <scope>NUCLEOTIDE SEQUENCE [LARGE SCALE GENOMIC DNA]</scope>
    <source>
        <strain>AV19 / DSM 6324 / JCM 9639 / NBRC 100938</strain>
    </source>
</reference>
<evidence type="ECO:0000255" key="1">
    <source>
        <dbReference type="HAMAP-Rule" id="MF_00604"/>
    </source>
</evidence>
<keyword id="KW-0648">Protein biosynthesis</keyword>
<keyword id="KW-1185">Reference proteome</keyword>
<keyword id="KW-0810">Translation regulation</keyword>
<protein>
    <recommendedName>
        <fullName evidence="1">Protein translation factor SUI1 homolog</fullName>
    </recommendedName>
</protein>
<name>SUI1_METKA</name>
<accession>Q8TX33</accession>
<dbReference type="EMBL" id="AE009439">
    <property type="protein sequence ID" value="AAM02057.1"/>
    <property type="molecule type" value="Genomic_DNA"/>
</dbReference>
<dbReference type="RefSeq" id="WP_011019212.1">
    <property type="nucleotide sequence ID" value="NC_003551.1"/>
</dbReference>
<dbReference type="SMR" id="Q8TX33"/>
<dbReference type="FunCoup" id="Q8TX33">
    <property type="interactions" value="84"/>
</dbReference>
<dbReference type="STRING" id="190192.MK0844"/>
<dbReference type="PaxDb" id="190192-MK0844"/>
<dbReference type="EnsemblBacteria" id="AAM02057">
    <property type="protein sequence ID" value="AAM02057"/>
    <property type="gene ID" value="MK0844"/>
</dbReference>
<dbReference type="GeneID" id="1476945"/>
<dbReference type="KEGG" id="mka:MK0844"/>
<dbReference type="PATRIC" id="fig|190192.8.peg.887"/>
<dbReference type="HOGENOM" id="CLU_082805_6_1_2"/>
<dbReference type="InParanoid" id="Q8TX33"/>
<dbReference type="OrthoDB" id="11182at2157"/>
<dbReference type="Proteomes" id="UP000001826">
    <property type="component" value="Chromosome"/>
</dbReference>
<dbReference type="GO" id="GO:0003729">
    <property type="term" value="F:mRNA binding"/>
    <property type="evidence" value="ECO:0007669"/>
    <property type="project" value="TreeGrafter"/>
</dbReference>
<dbReference type="GO" id="GO:0003743">
    <property type="term" value="F:translation initiation factor activity"/>
    <property type="evidence" value="ECO:0007669"/>
    <property type="project" value="InterPro"/>
</dbReference>
<dbReference type="GO" id="GO:0001731">
    <property type="term" value="P:formation of translation preinitiation complex"/>
    <property type="evidence" value="ECO:0007669"/>
    <property type="project" value="TreeGrafter"/>
</dbReference>
<dbReference type="GO" id="GO:0006417">
    <property type="term" value="P:regulation of translation"/>
    <property type="evidence" value="ECO:0007669"/>
    <property type="project" value="UniProtKB-UniRule"/>
</dbReference>
<dbReference type="GO" id="GO:0002188">
    <property type="term" value="P:translation reinitiation"/>
    <property type="evidence" value="ECO:0007669"/>
    <property type="project" value="TreeGrafter"/>
</dbReference>
<dbReference type="CDD" id="cd11567">
    <property type="entry name" value="YciH_like"/>
    <property type="match status" value="1"/>
</dbReference>
<dbReference type="Gene3D" id="3.30.780.10">
    <property type="entry name" value="SUI1-like domain"/>
    <property type="match status" value="1"/>
</dbReference>
<dbReference type="HAMAP" id="MF_00604">
    <property type="entry name" value="SUI1"/>
    <property type="match status" value="1"/>
</dbReference>
<dbReference type="InterPro" id="IPR050318">
    <property type="entry name" value="DENR/SUI1_TIF"/>
</dbReference>
<dbReference type="InterPro" id="IPR001950">
    <property type="entry name" value="SUI1"/>
</dbReference>
<dbReference type="InterPro" id="IPR022851">
    <property type="entry name" value="SUI1_arc"/>
</dbReference>
<dbReference type="InterPro" id="IPR005872">
    <property type="entry name" value="SUI1_arc_bac"/>
</dbReference>
<dbReference type="InterPro" id="IPR036877">
    <property type="entry name" value="SUI1_dom_sf"/>
</dbReference>
<dbReference type="NCBIfam" id="NF002096">
    <property type="entry name" value="PRK00939.1"/>
    <property type="match status" value="1"/>
</dbReference>
<dbReference type="PANTHER" id="PTHR12789:SF0">
    <property type="entry name" value="DENSITY-REGULATED PROTEIN"/>
    <property type="match status" value="1"/>
</dbReference>
<dbReference type="PANTHER" id="PTHR12789">
    <property type="entry name" value="DENSITY-REGULATED PROTEIN HOMOLOG"/>
    <property type="match status" value="1"/>
</dbReference>
<dbReference type="Pfam" id="PF01253">
    <property type="entry name" value="SUI1"/>
    <property type="match status" value="1"/>
</dbReference>
<dbReference type="PIRSF" id="PIRSF037511">
    <property type="entry name" value="Transl_init_SUI1_pro"/>
    <property type="match status" value="1"/>
</dbReference>
<dbReference type="SUPFAM" id="SSF55159">
    <property type="entry name" value="eIF1-like"/>
    <property type="match status" value="1"/>
</dbReference>
<dbReference type="PROSITE" id="PS50296">
    <property type="entry name" value="SUI1"/>
    <property type="match status" value="1"/>
</dbReference>
<sequence length="106" mass="11751">MQEDDICPVCGLPKELCVCEEVSKETVEKIKIYTEQVRPGKVVTIIEGLDDAGIDLQELASKLKRECACGGTAKEGKIILQGDHRNKVREFLIKKEGFSEDAIEVT</sequence>